<proteinExistence type="inferred from homology"/>
<sequence length="110" mass="12032">MSISVGLGSYLLVGAMLFCLGLYGVFVKRNIIAILMSIELMLNAVNINFIAFSRFAPWANPGTNPLIGQVAAIFVIVVAAAEIAVGLALVIAIYRNRRTTNVDEFNWLKW</sequence>
<protein>
    <recommendedName>
        <fullName evidence="1">NADH-quinone oxidoreductase subunit K</fullName>
        <ecNumber evidence="1">7.1.1.-</ecNumber>
    </recommendedName>
    <alternativeName>
        <fullName evidence="1">NADH dehydrogenase I subunit K</fullName>
    </alternativeName>
    <alternativeName>
        <fullName evidence="1">NDH-1 subunit K</fullName>
    </alternativeName>
</protein>
<dbReference type="EC" id="7.1.1.-" evidence="1"/>
<dbReference type="EMBL" id="CP001336">
    <property type="protein sequence ID" value="ACL21760.1"/>
    <property type="molecule type" value="Genomic_DNA"/>
</dbReference>
<dbReference type="RefSeq" id="WP_005813222.1">
    <property type="nucleotide sequence ID" value="NC_011830.1"/>
</dbReference>
<dbReference type="SMR" id="B8FRK0"/>
<dbReference type="KEGG" id="dhd:Dhaf_3744"/>
<dbReference type="HOGENOM" id="CLU_144724_1_1_9"/>
<dbReference type="Proteomes" id="UP000007726">
    <property type="component" value="Chromosome"/>
</dbReference>
<dbReference type="GO" id="GO:0030964">
    <property type="term" value="C:NADH dehydrogenase complex"/>
    <property type="evidence" value="ECO:0007669"/>
    <property type="project" value="TreeGrafter"/>
</dbReference>
<dbReference type="GO" id="GO:0005886">
    <property type="term" value="C:plasma membrane"/>
    <property type="evidence" value="ECO:0007669"/>
    <property type="project" value="UniProtKB-SubCell"/>
</dbReference>
<dbReference type="GO" id="GO:0050136">
    <property type="term" value="F:NADH:ubiquinone reductase (non-electrogenic) activity"/>
    <property type="evidence" value="ECO:0007669"/>
    <property type="project" value="UniProtKB-UniRule"/>
</dbReference>
<dbReference type="GO" id="GO:0048038">
    <property type="term" value="F:quinone binding"/>
    <property type="evidence" value="ECO:0007669"/>
    <property type="project" value="UniProtKB-KW"/>
</dbReference>
<dbReference type="GO" id="GO:0042773">
    <property type="term" value="P:ATP synthesis coupled electron transport"/>
    <property type="evidence" value="ECO:0007669"/>
    <property type="project" value="InterPro"/>
</dbReference>
<dbReference type="FunFam" id="1.10.287.3510:FF:000001">
    <property type="entry name" value="NADH-quinone oxidoreductase subunit K"/>
    <property type="match status" value="1"/>
</dbReference>
<dbReference type="Gene3D" id="1.10.287.3510">
    <property type="match status" value="1"/>
</dbReference>
<dbReference type="HAMAP" id="MF_01456">
    <property type="entry name" value="NDH1_NuoK"/>
    <property type="match status" value="1"/>
</dbReference>
<dbReference type="InterPro" id="IPR001133">
    <property type="entry name" value="NADH_UbQ_OxRdtase_chain4L/K"/>
</dbReference>
<dbReference type="InterPro" id="IPR039428">
    <property type="entry name" value="NUOK/Mnh_C1-like"/>
</dbReference>
<dbReference type="NCBIfam" id="NF004320">
    <property type="entry name" value="PRK05715.1-2"/>
    <property type="match status" value="1"/>
</dbReference>
<dbReference type="NCBIfam" id="NF004321">
    <property type="entry name" value="PRK05715.1-3"/>
    <property type="match status" value="1"/>
</dbReference>
<dbReference type="NCBIfam" id="NF004322">
    <property type="entry name" value="PRK05715.1-4"/>
    <property type="match status" value="1"/>
</dbReference>
<dbReference type="NCBIfam" id="NF004323">
    <property type="entry name" value="PRK05715.1-5"/>
    <property type="match status" value="1"/>
</dbReference>
<dbReference type="PANTHER" id="PTHR11434:SF16">
    <property type="entry name" value="NADH-UBIQUINONE OXIDOREDUCTASE CHAIN 4L"/>
    <property type="match status" value="1"/>
</dbReference>
<dbReference type="PANTHER" id="PTHR11434">
    <property type="entry name" value="NADH-UBIQUINONE OXIDOREDUCTASE SUBUNIT ND4L"/>
    <property type="match status" value="1"/>
</dbReference>
<dbReference type="Pfam" id="PF00420">
    <property type="entry name" value="Oxidored_q2"/>
    <property type="match status" value="1"/>
</dbReference>
<accession>B8FRK0</accession>
<evidence type="ECO:0000255" key="1">
    <source>
        <dbReference type="HAMAP-Rule" id="MF_01456"/>
    </source>
</evidence>
<keyword id="KW-1003">Cell membrane</keyword>
<keyword id="KW-0472">Membrane</keyword>
<keyword id="KW-0520">NAD</keyword>
<keyword id="KW-0874">Quinone</keyword>
<keyword id="KW-1278">Translocase</keyword>
<keyword id="KW-0812">Transmembrane</keyword>
<keyword id="KW-1133">Transmembrane helix</keyword>
<keyword id="KW-0813">Transport</keyword>
<comment type="function">
    <text evidence="1">NDH-1 shuttles electrons from NADH, via FMN and iron-sulfur (Fe-S) centers, to quinones in the respiratory chain. The immediate electron acceptor for the enzyme in this species is believed to be a menaquinone. Couples the redox reaction to proton translocation (for every two electrons transferred, four hydrogen ions are translocated across the cytoplasmic membrane), and thus conserves the redox energy in a proton gradient.</text>
</comment>
<comment type="catalytic activity">
    <reaction evidence="1">
        <text>a quinone + NADH + 5 H(+)(in) = a quinol + NAD(+) + 4 H(+)(out)</text>
        <dbReference type="Rhea" id="RHEA:57888"/>
        <dbReference type="ChEBI" id="CHEBI:15378"/>
        <dbReference type="ChEBI" id="CHEBI:24646"/>
        <dbReference type="ChEBI" id="CHEBI:57540"/>
        <dbReference type="ChEBI" id="CHEBI:57945"/>
        <dbReference type="ChEBI" id="CHEBI:132124"/>
    </reaction>
</comment>
<comment type="subunit">
    <text evidence="1">NDH-1 is composed of 14 different subunits. Subunits NuoA, H, J, K, L, M, N constitute the membrane sector of the complex.</text>
</comment>
<comment type="subcellular location">
    <subcellularLocation>
        <location evidence="1">Cell membrane</location>
        <topology evidence="1">Multi-pass membrane protein</topology>
    </subcellularLocation>
</comment>
<comment type="similarity">
    <text evidence="1">Belongs to the complex I subunit 4L family.</text>
</comment>
<name>NUOK_DESHD</name>
<reference key="1">
    <citation type="journal article" date="2012" name="BMC Microbiol.">
        <title>Genome sequence of Desulfitobacterium hafniense DCB-2, a Gram-positive anaerobe capable of dehalogenation and metal reduction.</title>
        <authorList>
            <person name="Kim S.H."/>
            <person name="Harzman C."/>
            <person name="Davis J.K."/>
            <person name="Hutcheson R."/>
            <person name="Broderick J.B."/>
            <person name="Marsh T.L."/>
            <person name="Tiedje J.M."/>
        </authorList>
    </citation>
    <scope>NUCLEOTIDE SEQUENCE [LARGE SCALE GENOMIC DNA]</scope>
    <source>
        <strain>DSM 10664 / DCB-2</strain>
    </source>
</reference>
<feature type="chain" id="PRO_0000390029" description="NADH-quinone oxidoreductase subunit K">
    <location>
        <begin position="1"/>
        <end position="110"/>
    </location>
</feature>
<feature type="transmembrane region" description="Helical" evidence="1">
    <location>
        <begin position="7"/>
        <end position="27"/>
    </location>
</feature>
<feature type="transmembrane region" description="Helical" evidence="1">
    <location>
        <begin position="31"/>
        <end position="51"/>
    </location>
</feature>
<feature type="transmembrane region" description="Helical" evidence="1">
    <location>
        <begin position="73"/>
        <end position="93"/>
    </location>
</feature>
<organism>
    <name type="scientific">Desulfitobacterium hafniense (strain DSM 10664 / DCB-2)</name>
    <dbReference type="NCBI Taxonomy" id="272564"/>
    <lineage>
        <taxon>Bacteria</taxon>
        <taxon>Bacillati</taxon>
        <taxon>Bacillota</taxon>
        <taxon>Clostridia</taxon>
        <taxon>Eubacteriales</taxon>
        <taxon>Desulfitobacteriaceae</taxon>
        <taxon>Desulfitobacterium</taxon>
    </lineage>
</organism>
<gene>
    <name evidence="1" type="primary">nuoK</name>
    <name type="ordered locus">Dhaf_3744</name>
</gene>